<proteinExistence type="inferred from homology"/>
<protein>
    <recommendedName>
        <fullName evidence="1">Large ribosomal subunit protein uL14</fullName>
    </recommendedName>
    <alternativeName>
        <fullName evidence="2">50S ribosomal protein L14</fullName>
    </alternativeName>
</protein>
<organism>
    <name type="scientific">Methanococcus maripaludis (strain C5 / ATCC BAA-1333)</name>
    <dbReference type="NCBI Taxonomy" id="402880"/>
    <lineage>
        <taxon>Archaea</taxon>
        <taxon>Methanobacteriati</taxon>
        <taxon>Methanobacteriota</taxon>
        <taxon>Methanomada group</taxon>
        <taxon>Methanococci</taxon>
        <taxon>Methanococcales</taxon>
        <taxon>Methanococcaceae</taxon>
        <taxon>Methanococcus</taxon>
    </lineage>
</organism>
<dbReference type="EMBL" id="CP000609">
    <property type="protein sequence ID" value="ABO34486.1"/>
    <property type="molecule type" value="Genomic_DNA"/>
</dbReference>
<dbReference type="RefSeq" id="WP_011867945.1">
    <property type="nucleotide sequence ID" value="NC_009135.1"/>
</dbReference>
<dbReference type="SMR" id="A4FWB1"/>
<dbReference type="STRING" id="402880.MmarC5_0169"/>
<dbReference type="GeneID" id="4929341"/>
<dbReference type="KEGG" id="mmq:MmarC5_0169"/>
<dbReference type="eggNOG" id="arCOG04095">
    <property type="taxonomic scope" value="Archaea"/>
</dbReference>
<dbReference type="HOGENOM" id="CLU_095071_3_1_2"/>
<dbReference type="OrthoDB" id="23569at2157"/>
<dbReference type="Proteomes" id="UP000000253">
    <property type="component" value="Chromosome"/>
</dbReference>
<dbReference type="GO" id="GO:0022625">
    <property type="term" value="C:cytosolic large ribosomal subunit"/>
    <property type="evidence" value="ECO:0007669"/>
    <property type="project" value="TreeGrafter"/>
</dbReference>
<dbReference type="GO" id="GO:0070180">
    <property type="term" value="F:large ribosomal subunit rRNA binding"/>
    <property type="evidence" value="ECO:0007669"/>
    <property type="project" value="TreeGrafter"/>
</dbReference>
<dbReference type="GO" id="GO:0003735">
    <property type="term" value="F:structural constituent of ribosome"/>
    <property type="evidence" value="ECO:0007669"/>
    <property type="project" value="InterPro"/>
</dbReference>
<dbReference type="GO" id="GO:0006412">
    <property type="term" value="P:translation"/>
    <property type="evidence" value="ECO:0007669"/>
    <property type="project" value="UniProtKB-UniRule"/>
</dbReference>
<dbReference type="CDD" id="cd00337">
    <property type="entry name" value="Ribosomal_uL14"/>
    <property type="match status" value="1"/>
</dbReference>
<dbReference type="FunFam" id="2.40.150.20:FF:000007">
    <property type="entry name" value="50S ribosomal protein L14"/>
    <property type="match status" value="1"/>
</dbReference>
<dbReference type="Gene3D" id="2.40.150.20">
    <property type="entry name" value="Ribosomal protein L14"/>
    <property type="match status" value="1"/>
</dbReference>
<dbReference type="HAMAP" id="MF_01367">
    <property type="entry name" value="Ribosomal_uL14"/>
    <property type="match status" value="1"/>
</dbReference>
<dbReference type="InterPro" id="IPR000218">
    <property type="entry name" value="Ribosomal_uL14"/>
</dbReference>
<dbReference type="InterPro" id="IPR019971">
    <property type="entry name" value="Ribosomal_uL14_arc"/>
</dbReference>
<dbReference type="InterPro" id="IPR019972">
    <property type="entry name" value="Ribosomal_uL14_CS"/>
</dbReference>
<dbReference type="InterPro" id="IPR036853">
    <property type="entry name" value="Ribosomal_uL14_sf"/>
</dbReference>
<dbReference type="NCBIfam" id="NF006344">
    <property type="entry name" value="PRK08571.1"/>
    <property type="match status" value="1"/>
</dbReference>
<dbReference type="NCBIfam" id="TIGR03673">
    <property type="entry name" value="uL14_arch"/>
    <property type="match status" value="1"/>
</dbReference>
<dbReference type="PANTHER" id="PTHR11761">
    <property type="entry name" value="50S/60S RIBOSOMAL PROTEIN L14/L23"/>
    <property type="match status" value="1"/>
</dbReference>
<dbReference type="PANTHER" id="PTHR11761:SF8">
    <property type="entry name" value="LARGE RIBOSOMAL SUBUNIT PROTEIN UL14"/>
    <property type="match status" value="1"/>
</dbReference>
<dbReference type="Pfam" id="PF00238">
    <property type="entry name" value="Ribosomal_L14"/>
    <property type="match status" value="1"/>
</dbReference>
<dbReference type="SMART" id="SM01374">
    <property type="entry name" value="Ribosomal_L14"/>
    <property type="match status" value="1"/>
</dbReference>
<dbReference type="SUPFAM" id="SSF50193">
    <property type="entry name" value="Ribosomal protein L14"/>
    <property type="match status" value="1"/>
</dbReference>
<dbReference type="PROSITE" id="PS00049">
    <property type="entry name" value="RIBOSOMAL_L14"/>
    <property type="match status" value="1"/>
</dbReference>
<accession>A4FWB1</accession>
<evidence type="ECO:0000255" key="1">
    <source>
        <dbReference type="HAMAP-Rule" id="MF_01367"/>
    </source>
</evidence>
<evidence type="ECO:0000305" key="2"/>
<feature type="chain" id="PRO_1000055630" description="Large ribosomal subunit protein uL14">
    <location>
        <begin position="1"/>
        <end position="132"/>
    </location>
</feature>
<comment type="function">
    <text evidence="1">Binds to 23S rRNA. Forms part of two intersubunit bridges in the 70S ribosome.</text>
</comment>
<comment type="subunit">
    <text evidence="1">Part of the 50S ribosomal subunit. Forms a cluster with proteins L3 and L24e, part of which may contact the 16S rRNA in 2 intersubunit bridges.</text>
</comment>
<comment type="similarity">
    <text evidence="1">Belongs to the universal ribosomal protein uL14 family.</text>
</comment>
<keyword id="KW-0687">Ribonucleoprotein</keyword>
<keyword id="KW-0689">Ribosomal protein</keyword>
<keyword id="KW-0694">RNA-binding</keyword>
<keyword id="KW-0699">rRNA-binding</keyword>
<gene>
    <name evidence="1" type="primary">rpl14</name>
    <name type="ordered locus">MmarC5_0169</name>
</gene>
<sequence length="132" mass="14228">MKGLGSTIVRSLPNGARLVCADNTGAKELEVIAVKNYVGTVRRLPAGGVGHMVFVSVKKGTPEMRKQVLPAIIIRQKKEYKRADGTRVKFEDNAAVIVTPEGTPKGSEIKGPVSKEAAERWPGVSRLAKIIH</sequence>
<reference key="1">
    <citation type="submission" date="2007-03" db="EMBL/GenBank/DDBJ databases">
        <title>Complete sequence of chromosome of Methanococcus maripaludis C5.</title>
        <authorList>
            <consortium name="US DOE Joint Genome Institute"/>
            <person name="Copeland A."/>
            <person name="Lucas S."/>
            <person name="Lapidus A."/>
            <person name="Barry K."/>
            <person name="Glavina del Rio T."/>
            <person name="Dalin E."/>
            <person name="Tice H."/>
            <person name="Pitluck S."/>
            <person name="Chertkov O."/>
            <person name="Brettin T."/>
            <person name="Bruce D."/>
            <person name="Han C."/>
            <person name="Detter J.C."/>
            <person name="Schmutz J."/>
            <person name="Larimer F."/>
            <person name="Land M."/>
            <person name="Hauser L."/>
            <person name="Kyrpides N."/>
            <person name="Mikhailova N."/>
            <person name="Sieprawska-Lupa M."/>
            <person name="Whitman W.B."/>
            <person name="Richardson P."/>
        </authorList>
    </citation>
    <scope>NUCLEOTIDE SEQUENCE [LARGE SCALE GENOMIC DNA]</scope>
    <source>
        <strain>C5 / ATCC BAA-1333</strain>
    </source>
</reference>
<name>RL14_METM5</name>